<comment type="function">
    <text evidence="1">Provides the (R)-glutamate required for cell wall biosynthesis.</text>
</comment>
<comment type="catalytic activity">
    <reaction evidence="1">
        <text>L-glutamate = D-glutamate</text>
        <dbReference type="Rhea" id="RHEA:12813"/>
        <dbReference type="ChEBI" id="CHEBI:29985"/>
        <dbReference type="ChEBI" id="CHEBI:29986"/>
        <dbReference type="EC" id="5.1.1.3"/>
    </reaction>
</comment>
<comment type="pathway">
    <text evidence="1">Cell wall biogenesis; peptidoglycan biosynthesis.</text>
</comment>
<comment type="similarity">
    <text evidence="1">Belongs to the aspartate/glutamate racemases family.</text>
</comment>
<evidence type="ECO:0000255" key="1">
    <source>
        <dbReference type="HAMAP-Rule" id="MF_00258"/>
    </source>
</evidence>
<accession>B0KNE7</accession>
<gene>
    <name evidence="1" type="primary">murI</name>
    <name type="ordered locus">PputGB1_0777</name>
</gene>
<sequence>MAERSAPVGVMDSGVGGLSVLAEIQRLLPNETLLYVADCGHVPYGEKSPDYIRQRCRHIAGFFHEQGAKAMVLACNTATVAAVADLRELYPTWPLVGMEPAVKPAAAATRSGVVGVLATTGTLQSAKFAALLDRFANDVQVITQPCPGLVELIETGDLTSPVLRQMLWGYVQPLLAAGCDTLILGCTHYPFLRPLLAGMVPADVAVIDTGAAVARQLQRLLGANDLLAEGPAGDARFWTSADPEILRKILPVLWHKCGDVQSFAL</sequence>
<name>MURI_PSEPG</name>
<feature type="chain" id="PRO_1000078564" description="Glutamate racemase">
    <location>
        <begin position="1"/>
        <end position="265"/>
    </location>
</feature>
<feature type="active site" description="Proton donor/acceptor" evidence="1">
    <location>
        <position position="75"/>
    </location>
</feature>
<feature type="active site" description="Proton donor/acceptor" evidence="1">
    <location>
        <position position="186"/>
    </location>
</feature>
<feature type="binding site" evidence="1">
    <location>
        <begin position="12"/>
        <end position="13"/>
    </location>
    <ligand>
        <name>substrate</name>
    </ligand>
</feature>
<feature type="binding site" evidence="1">
    <location>
        <begin position="44"/>
        <end position="45"/>
    </location>
    <ligand>
        <name>substrate</name>
    </ligand>
</feature>
<feature type="binding site" evidence="1">
    <location>
        <begin position="76"/>
        <end position="77"/>
    </location>
    <ligand>
        <name>substrate</name>
    </ligand>
</feature>
<feature type="binding site" evidence="1">
    <location>
        <begin position="187"/>
        <end position="188"/>
    </location>
    <ligand>
        <name>substrate</name>
    </ligand>
</feature>
<organism>
    <name type="scientific">Pseudomonas putida (strain GB-1)</name>
    <dbReference type="NCBI Taxonomy" id="76869"/>
    <lineage>
        <taxon>Bacteria</taxon>
        <taxon>Pseudomonadati</taxon>
        <taxon>Pseudomonadota</taxon>
        <taxon>Gammaproteobacteria</taxon>
        <taxon>Pseudomonadales</taxon>
        <taxon>Pseudomonadaceae</taxon>
        <taxon>Pseudomonas</taxon>
    </lineage>
</organism>
<proteinExistence type="inferred from homology"/>
<dbReference type="EC" id="5.1.1.3" evidence="1"/>
<dbReference type="EMBL" id="CP000926">
    <property type="protein sequence ID" value="ABY96687.1"/>
    <property type="molecule type" value="Genomic_DNA"/>
</dbReference>
<dbReference type="RefSeq" id="WP_012270488.1">
    <property type="nucleotide sequence ID" value="NC_010322.1"/>
</dbReference>
<dbReference type="SMR" id="B0KNE7"/>
<dbReference type="KEGG" id="ppg:PputGB1_0777"/>
<dbReference type="eggNOG" id="COG0796">
    <property type="taxonomic scope" value="Bacteria"/>
</dbReference>
<dbReference type="HOGENOM" id="CLU_052344_1_0_6"/>
<dbReference type="UniPathway" id="UPA00219"/>
<dbReference type="Proteomes" id="UP000002157">
    <property type="component" value="Chromosome"/>
</dbReference>
<dbReference type="GO" id="GO:0008881">
    <property type="term" value="F:glutamate racemase activity"/>
    <property type="evidence" value="ECO:0007669"/>
    <property type="project" value="UniProtKB-UniRule"/>
</dbReference>
<dbReference type="GO" id="GO:0071555">
    <property type="term" value="P:cell wall organization"/>
    <property type="evidence" value="ECO:0007669"/>
    <property type="project" value="UniProtKB-KW"/>
</dbReference>
<dbReference type="GO" id="GO:0009252">
    <property type="term" value="P:peptidoglycan biosynthetic process"/>
    <property type="evidence" value="ECO:0007669"/>
    <property type="project" value="UniProtKB-UniRule"/>
</dbReference>
<dbReference type="GO" id="GO:0008360">
    <property type="term" value="P:regulation of cell shape"/>
    <property type="evidence" value="ECO:0007669"/>
    <property type="project" value="UniProtKB-KW"/>
</dbReference>
<dbReference type="FunFam" id="3.40.50.1860:FF:000001">
    <property type="entry name" value="Glutamate racemase"/>
    <property type="match status" value="1"/>
</dbReference>
<dbReference type="Gene3D" id="3.40.50.1860">
    <property type="match status" value="2"/>
</dbReference>
<dbReference type="HAMAP" id="MF_00258">
    <property type="entry name" value="Glu_racemase"/>
    <property type="match status" value="1"/>
</dbReference>
<dbReference type="InterPro" id="IPR015942">
    <property type="entry name" value="Asp/Glu/hydantoin_racemase"/>
</dbReference>
<dbReference type="InterPro" id="IPR001920">
    <property type="entry name" value="Asp/Glu_race"/>
</dbReference>
<dbReference type="InterPro" id="IPR018187">
    <property type="entry name" value="Asp/Glu_racemase_AS_1"/>
</dbReference>
<dbReference type="InterPro" id="IPR033134">
    <property type="entry name" value="Asp/Glu_racemase_AS_2"/>
</dbReference>
<dbReference type="InterPro" id="IPR004391">
    <property type="entry name" value="Glu_race"/>
</dbReference>
<dbReference type="NCBIfam" id="TIGR00067">
    <property type="entry name" value="glut_race"/>
    <property type="match status" value="1"/>
</dbReference>
<dbReference type="PANTHER" id="PTHR21198">
    <property type="entry name" value="GLUTAMATE RACEMASE"/>
    <property type="match status" value="1"/>
</dbReference>
<dbReference type="PANTHER" id="PTHR21198:SF2">
    <property type="entry name" value="GLUTAMATE RACEMASE"/>
    <property type="match status" value="1"/>
</dbReference>
<dbReference type="Pfam" id="PF01177">
    <property type="entry name" value="Asp_Glu_race"/>
    <property type="match status" value="1"/>
</dbReference>
<dbReference type="SUPFAM" id="SSF53681">
    <property type="entry name" value="Aspartate/glutamate racemase"/>
    <property type="match status" value="2"/>
</dbReference>
<dbReference type="PROSITE" id="PS00923">
    <property type="entry name" value="ASP_GLU_RACEMASE_1"/>
    <property type="match status" value="1"/>
</dbReference>
<dbReference type="PROSITE" id="PS00924">
    <property type="entry name" value="ASP_GLU_RACEMASE_2"/>
    <property type="match status" value="1"/>
</dbReference>
<keyword id="KW-0133">Cell shape</keyword>
<keyword id="KW-0961">Cell wall biogenesis/degradation</keyword>
<keyword id="KW-0413">Isomerase</keyword>
<keyword id="KW-0573">Peptidoglycan synthesis</keyword>
<protein>
    <recommendedName>
        <fullName evidence="1">Glutamate racemase</fullName>
        <ecNumber evidence="1">5.1.1.3</ecNumber>
    </recommendedName>
</protein>
<reference key="1">
    <citation type="submission" date="2008-01" db="EMBL/GenBank/DDBJ databases">
        <title>Complete sequence of Pseudomonas putida GB-1.</title>
        <authorList>
            <consortium name="US DOE Joint Genome Institute"/>
            <person name="Copeland A."/>
            <person name="Lucas S."/>
            <person name="Lapidus A."/>
            <person name="Barry K."/>
            <person name="Glavina del Rio T."/>
            <person name="Dalin E."/>
            <person name="Tice H."/>
            <person name="Pitluck S."/>
            <person name="Bruce D."/>
            <person name="Goodwin L."/>
            <person name="Chertkov O."/>
            <person name="Brettin T."/>
            <person name="Detter J.C."/>
            <person name="Han C."/>
            <person name="Kuske C.R."/>
            <person name="Schmutz J."/>
            <person name="Larimer F."/>
            <person name="Land M."/>
            <person name="Hauser L."/>
            <person name="Kyrpides N."/>
            <person name="Kim E."/>
            <person name="McCarthy J.K."/>
            <person name="Richardson P."/>
        </authorList>
    </citation>
    <scope>NUCLEOTIDE SEQUENCE [LARGE SCALE GENOMIC DNA]</scope>
    <source>
        <strain>GB-1</strain>
    </source>
</reference>